<reference key="1">
    <citation type="journal article" date="1998" name="Science">
        <title>Genome sequence of the nematode C. elegans: a platform for investigating biology.</title>
        <authorList>
            <consortium name="The C. elegans sequencing consortium"/>
        </authorList>
    </citation>
    <scope>NUCLEOTIDE SEQUENCE [LARGE SCALE GENOMIC DNA]</scope>
    <source>
        <strain>Bristol N2</strain>
    </source>
</reference>
<name>DIM1_CAEEL</name>
<proteinExistence type="inferred from homology"/>
<protein>
    <recommendedName>
        <fullName>Probable dimethyladenosine transferase</fullName>
        <ecNumber>2.1.1.183</ecNumber>
    </recommendedName>
    <alternativeName>
        <fullName>Probable 18S rRNA (adenine(1779)-N(6)/adenine(1780)-N(6))-dimethyltransferase</fullName>
    </alternativeName>
    <alternativeName>
        <fullName>Probable 18S rRNA dimethylase</fullName>
    </alternativeName>
    <alternativeName>
        <fullName>Probable S-adenosylmethionine-6-N',N'-adenosyl(rRNA) dimethyltransferase</fullName>
    </alternativeName>
</protein>
<comment type="function">
    <text evidence="2">Specifically dimethylates two adjacent adenosines in the loop of a conserved hairpin near the 3'-end of 18S rRNA in the 40S particle. Involved in the pre-rRNA processing steps leading to small-subunit rRNA production independently of its RNA-modifying catalytic activity. Part of the small subunit (SSU) processome, first precursor of the small eukaryotic ribosomal subunit. During the assembly of the SSU processome in the nucleolus, many ribosome biogenesis factors, an RNA chaperone and ribosomal proteins associate with the nascent pre-rRNA and work in concert to generate RNA folding, modifications, rearrangements and cleavage as well as targeted degradation of pre-ribosomal RNA by the RNA exosome.</text>
</comment>
<comment type="catalytic activity">
    <reaction>
        <text>adenosine(1779)/adenosine(1780) in 18S rRNA + 4 S-adenosyl-L-methionine = N(6)-dimethyladenosine(1779)/N(6)-dimethyladenosine(1780) in 18S rRNA + 4 S-adenosyl-L-homocysteine + 4 H(+)</text>
        <dbReference type="Rhea" id="RHEA:42780"/>
        <dbReference type="Rhea" id="RHEA-COMP:10234"/>
        <dbReference type="Rhea" id="RHEA-COMP:10236"/>
        <dbReference type="ChEBI" id="CHEBI:15378"/>
        <dbReference type="ChEBI" id="CHEBI:57856"/>
        <dbReference type="ChEBI" id="CHEBI:59789"/>
        <dbReference type="ChEBI" id="CHEBI:74411"/>
        <dbReference type="ChEBI" id="CHEBI:74493"/>
        <dbReference type="EC" id="2.1.1.183"/>
    </reaction>
</comment>
<comment type="subunit">
    <text evidence="2">Part of the small subunit (SSU) processome, composed of more than 70 proteins and the RNA chaperone small nucleolar RNA (snoRNA) U3.</text>
</comment>
<comment type="subcellular location">
    <subcellularLocation>
        <location evidence="1">Nucleus</location>
        <location evidence="1">Nucleolus</location>
    </subcellularLocation>
</comment>
<comment type="similarity">
    <text evidence="3">Belongs to the class I-like SAM-binding methyltransferase superfamily. rRNA adenine N(6)-methyltransferase family.</text>
</comment>
<evidence type="ECO:0000250" key="1"/>
<evidence type="ECO:0000250" key="2">
    <source>
        <dbReference type="UniProtKB" id="Q9UNQ2"/>
    </source>
</evidence>
<evidence type="ECO:0000255" key="3">
    <source>
        <dbReference type="PROSITE-ProRule" id="PRU01026"/>
    </source>
</evidence>
<evidence type="ECO:0000256" key="4">
    <source>
        <dbReference type="SAM" id="MobiDB-lite"/>
    </source>
</evidence>
<dbReference type="EC" id="2.1.1.183"/>
<dbReference type="EMBL" id="Z47075">
    <property type="protein sequence ID" value="CAA87382.2"/>
    <property type="molecule type" value="Genomic_DNA"/>
</dbReference>
<dbReference type="PIR" id="T20417">
    <property type="entry name" value="T20417"/>
</dbReference>
<dbReference type="RefSeq" id="NP_496061.2">
    <property type="nucleotide sequence ID" value="NM_063660.7"/>
</dbReference>
<dbReference type="SMR" id="Q09522"/>
<dbReference type="BioGRID" id="48796">
    <property type="interactions" value="2"/>
</dbReference>
<dbReference type="FunCoup" id="Q09522">
    <property type="interactions" value="2209"/>
</dbReference>
<dbReference type="STRING" id="6239.E02H1.1.2"/>
<dbReference type="PaxDb" id="6239-E02H1.1.1"/>
<dbReference type="PeptideAtlas" id="Q09522"/>
<dbReference type="EnsemblMetazoa" id="E02H1.1.1">
    <property type="protein sequence ID" value="E02H1.1.1"/>
    <property type="gene ID" value="WBGene00008455"/>
</dbReference>
<dbReference type="GeneID" id="183993"/>
<dbReference type="KEGG" id="cel:CELE_E02H1.1"/>
<dbReference type="UCSC" id="E02H1.1.1">
    <property type="organism name" value="c. elegans"/>
</dbReference>
<dbReference type="AGR" id="WB:WBGene00008455"/>
<dbReference type="CTD" id="183993"/>
<dbReference type="WormBase" id="E02H1.1">
    <property type="protein sequence ID" value="CE30642"/>
    <property type="gene ID" value="WBGene00008455"/>
</dbReference>
<dbReference type="eggNOG" id="KOG0820">
    <property type="taxonomic scope" value="Eukaryota"/>
</dbReference>
<dbReference type="GeneTree" id="ENSGT00950000183142"/>
<dbReference type="HOGENOM" id="CLU_041220_2_3_1"/>
<dbReference type="InParanoid" id="Q09522"/>
<dbReference type="OMA" id="GMFQKEV"/>
<dbReference type="OrthoDB" id="74991at2759"/>
<dbReference type="PhylomeDB" id="Q09522"/>
<dbReference type="PRO" id="PR:Q09522"/>
<dbReference type="Proteomes" id="UP000001940">
    <property type="component" value="Chromosome II"/>
</dbReference>
<dbReference type="Bgee" id="WBGene00008455">
    <property type="expression patterns" value="Expressed in germ line (C elegans) and 4 other cell types or tissues"/>
</dbReference>
<dbReference type="GO" id="GO:0005730">
    <property type="term" value="C:nucleolus"/>
    <property type="evidence" value="ECO:0000318"/>
    <property type="project" value="GO_Central"/>
</dbReference>
<dbReference type="GO" id="GO:0032040">
    <property type="term" value="C:small-subunit processome"/>
    <property type="evidence" value="ECO:0000250"/>
    <property type="project" value="UniProtKB"/>
</dbReference>
<dbReference type="GO" id="GO:0052909">
    <property type="term" value="F:18S rRNA (adenine(1779)-N(6)/adenine(1780)-N(6))-dimethyltransferase activity"/>
    <property type="evidence" value="ECO:0000250"/>
    <property type="project" value="UniProtKB"/>
</dbReference>
<dbReference type="GO" id="GO:0003723">
    <property type="term" value="F:RNA binding"/>
    <property type="evidence" value="ECO:0007669"/>
    <property type="project" value="UniProtKB-KW"/>
</dbReference>
<dbReference type="GO" id="GO:0000179">
    <property type="term" value="F:rRNA (adenine-N6,N6-)-dimethyltransferase activity"/>
    <property type="evidence" value="ECO:0000318"/>
    <property type="project" value="GO_Central"/>
</dbReference>
<dbReference type="GO" id="GO:0042274">
    <property type="term" value="P:ribosomal small subunit biogenesis"/>
    <property type="evidence" value="ECO:0000250"/>
    <property type="project" value="UniProtKB"/>
</dbReference>
<dbReference type="GO" id="GO:0031167">
    <property type="term" value="P:rRNA methylation"/>
    <property type="evidence" value="ECO:0000318"/>
    <property type="project" value="GO_Central"/>
</dbReference>
<dbReference type="CDD" id="cd02440">
    <property type="entry name" value="AdoMet_MTases"/>
    <property type="match status" value="1"/>
</dbReference>
<dbReference type="FunFam" id="1.10.8.480:FF:000009">
    <property type="entry name" value="rRNA adenine N(6)-methyltransferase"/>
    <property type="match status" value="1"/>
</dbReference>
<dbReference type="FunFam" id="3.40.50.150:FF:000007">
    <property type="entry name" value="rRNA adenine N(6)-methyltransferase"/>
    <property type="match status" value="1"/>
</dbReference>
<dbReference type="Gene3D" id="1.10.8.480">
    <property type="match status" value="1"/>
</dbReference>
<dbReference type="Gene3D" id="3.40.50.150">
    <property type="entry name" value="Vaccinia Virus protein VP39"/>
    <property type="match status" value="1"/>
</dbReference>
<dbReference type="InterPro" id="IPR001737">
    <property type="entry name" value="KsgA/Erm"/>
</dbReference>
<dbReference type="InterPro" id="IPR020596">
    <property type="entry name" value="rRNA_Ade_Mease_Trfase_CS"/>
</dbReference>
<dbReference type="InterPro" id="IPR020598">
    <property type="entry name" value="rRNA_Ade_methylase_Trfase_N"/>
</dbReference>
<dbReference type="InterPro" id="IPR011530">
    <property type="entry name" value="rRNA_adenine_dimethylase"/>
</dbReference>
<dbReference type="InterPro" id="IPR029063">
    <property type="entry name" value="SAM-dependent_MTases_sf"/>
</dbReference>
<dbReference type="NCBIfam" id="TIGR00755">
    <property type="entry name" value="ksgA"/>
    <property type="match status" value="1"/>
</dbReference>
<dbReference type="PANTHER" id="PTHR11727">
    <property type="entry name" value="DIMETHYLADENOSINE TRANSFERASE"/>
    <property type="match status" value="1"/>
</dbReference>
<dbReference type="PANTHER" id="PTHR11727:SF7">
    <property type="entry name" value="DIMETHYLADENOSINE TRANSFERASE-RELATED"/>
    <property type="match status" value="1"/>
</dbReference>
<dbReference type="Pfam" id="PF00398">
    <property type="entry name" value="RrnaAD"/>
    <property type="match status" value="1"/>
</dbReference>
<dbReference type="SMART" id="SM00650">
    <property type="entry name" value="rADc"/>
    <property type="match status" value="1"/>
</dbReference>
<dbReference type="SUPFAM" id="SSF53335">
    <property type="entry name" value="S-adenosyl-L-methionine-dependent methyltransferases"/>
    <property type="match status" value="1"/>
</dbReference>
<dbReference type="PROSITE" id="PS01131">
    <property type="entry name" value="RRNA_A_DIMETH"/>
    <property type="match status" value="1"/>
</dbReference>
<dbReference type="PROSITE" id="PS51689">
    <property type="entry name" value="SAM_RNA_A_N6_MT"/>
    <property type="match status" value="1"/>
</dbReference>
<sequence>MGKTSKVKKTKAGSSTGNVQSLPFNTDKGQHILKNPGVVNAIVEKSALKATDTVLEVGPGTGNLTVKMLEVAKTVIACEIDPRMIAEVKKRVMGTPLQNKLQVNGGDVMKMEWPFFDVCVANLPYQISSPFVQKLLLHRPLPRYAVLMFQKEFADRLVARPGDKDYSRLSVNVQLLAKVEMLMKVKRTEFRPPPKVDSAVVRIAPKNPPPPVNFVEWEGLLRLCFMRKNKTLMAIFRLSNVIEVIEDNFRKVCSFKNKPIPKDLNMKKVIEETLTASGYGESRARKMRVEDFLALLLAFNKADIHFLS</sequence>
<gene>
    <name type="ORF">E02H1.1</name>
</gene>
<keyword id="KW-0489">Methyltransferase</keyword>
<keyword id="KW-0539">Nucleus</keyword>
<keyword id="KW-1185">Reference proteome</keyword>
<keyword id="KW-0694">RNA-binding</keyword>
<keyword id="KW-0698">rRNA processing</keyword>
<keyword id="KW-0949">S-adenosyl-L-methionine</keyword>
<keyword id="KW-0808">Transferase</keyword>
<accession>Q09522</accession>
<organism>
    <name type="scientific">Caenorhabditis elegans</name>
    <dbReference type="NCBI Taxonomy" id="6239"/>
    <lineage>
        <taxon>Eukaryota</taxon>
        <taxon>Metazoa</taxon>
        <taxon>Ecdysozoa</taxon>
        <taxon>Nematoda</taxon>
        <taxon>Chromadorea</taxon>
        <taxon>Rhabditida</taxon>
        <taxon>Rhabditina</taxon>
        <taxon>Rhabditomorpha</taxon>
        <taxon>Rhabditoidea</taxon>
        <taxon>Rhabditidae</taxon>
        <taxon>Peloderinae</taxon>
        <taxon>Caenorhabditis</taxon>
    </lineage>
</organism>
<feature type="chain" id="PRO_0000101468" description="Probable dimethyladenosine transferase">
    <location>
        <begin position="1"/>
        <end position="308"/>
    </location>
</feature>
<feature type="region of interest" description="Disordered" evidence="4">
    <location>
        <begin position="1"/>
        <end position="24"/>
    </location>
</feature>
<feature type="compositionally biased region" description="Basic residues" evidence="4">
    <location>
        <begin position="1"/>
        <end position="11"/>
    </location>
</feature>
<feature type="compositionally biased region" description="Polar residues" evidence="4">
    <location>
        <begin position="12"/>
        <end position="24"/>
    </location>
</feature>
<feature type="binding site" evidence="3">
    <location>
        <position position="31"/>
    </location>
    <ligand>
        <name>S-adenosyl-L-methionine</name>
        <dbReference type="ChEBI" id="CHEBI:59789"/>
    </ligand>
</feature>
<feature type="binding site" evidence="3">
    <location>
        <position position="33"/>
    </location>
    <ligand>
        <name>S-adenosyl-L-methionine</name>
        <dbReference type="ChEBI" id="CHEBI:59789"/>
    </ligand>
</feature>
<feature type="binding site" evidence="3">
    <location>
        <position position="58"/>
    </location>
    <ligand>
        <name>S-adenosyl-L-methionine</name>
        <dbReference type="ChEBI" id="CHEBI:59789"/>
    </ligand>
</feature>
<feature type="binding site" evidence="3">
    <location>
        <position position="79"/>
    </location>
    <ligand>
        <name>S-adenosyl-L-methionine</name>
        <dbReference type="ChEBI" id="CHEBI:59789"/>
    </ligand>
</feature>
<feature type="binding site" evidence="3">
    <location>
        <position position="107"/>
    </location>
    <ligand>
        <name>S-adenosyl-L-methionine</name>
        <dbReference type="ChEBI" id="CHEBI:59789"/>
    </ligand>
</feature>
<feature type="binding site" evidence="3">
    <location>
        <position position="122"/>
    </location>
    <ligand>
        <name>S-adenosyl-L-methionine</name>
        <dbReference type="ChEBI" id="CHEBI:59789"/>
    </ligand>
</feature>